<organism>
    <name type="scientific">Carboxydothermus hydrogenoformans (strain ATCC BAA-161 / DSM 6008 / Z-2901)</name>
    <dbReference type="NCBI Taxonomy" id="246194"/>
    <lineage>
        <taxon>Bacteria</taxon>
        <taxon>Bacillati</taxon>
        <taxon>Bacillota</taxon>
        <taxon>Clostridia</taxon>
        <taxon>Thermoanaerobacterales</taxon>
        <taxon>Thermoanaerobacteraceae</taxon>
        <taxon>Carboxydothermus</taxon>
    </lineage>
</organism>
<keyword id="KW-0030">Aminoacyl-tRNA synthetase</keyword>
<keyword id="KW-0067">ATP-binding</keyword>
<keyword id="KW-0963">Cytoplasm</keyword>
<keyword id="KW-0436">Ligase</keyword>
<keyword id="KW-0547">Nucleotide-binding</keyword>
<keyword id="KW-0648">Protein biosynthesis</keyword>
<keyword id="KW-1185">Reference proteome</keyword>
<name>SYL_CARHZ</name>
<comment type="catalytic activity">
    <reaction evidence="1">
        <text>tRNA(Leu) + L-leucine + ATP = L-leucyl-tRNA(Leu) + AMP + diphosphate</text>
        <dbReference type="Rhea" id="RHEA:11688"/>
        <dbReference type="Rhea" id="RHEA-COMP:9613"/>
        <dbReference type="Rhea" id="RHEA-COMP:9622"/>
        <dbReference type="ChEBI" id="CHEBI:30616"/>
        <dbReference type="ChEBI" id="CHEBI:33019"/>
        <dbReference type="ChEBI" id="CHEBI:57427"/>
        <dbReference type="ChEBI" id="CHEBI:78442"/>
        <dbReference type="ChEBI" id="CHEBI:78494"/>
        <dbReference type="ChEBI" id="CHEBI:456215"/>
        <dbReference type="EC" id="6.1.1.4"/>
    </reaction>
</comment>
<comment type="subcellular location">
    <subcellularLocation>
        <location evidence="1">Cytoplasm</location>
    </subcellularLocation>
</comment>
<comment type="similarity">
    <text evidence="1">Belongs to the class-I aminoacyl-tRNA synthetase family.</text>
</comment>
<sequence>MQERYDFKAIEAKWQKKWEELKLYEVDDFSEKPKYYCLEMFPYPSGKLHMGHVRNYSIGDVVARYKRMRGYAVLHPMGWDAFGLPAENAAIKHGNVHPADWTWDNIANMRRQLKELGISYDWRREIATCHPEYYRWTQWLFLQFYKKGLAYKKKAPVNWCPGCQTVLANEQVIDGECERCHSRVEKKELEQWFFKITAYAERLLQDIKKLTGWPEKVKIMQENWIGRSEGAEITFKIKGHEETISVFTTRPDTIFGVTYMVLAPEHPLVEKISRGTQYEKDVLEFKRKMMYLSEIERTAETAEKEGVFTGAYAINPFTGEEIPILLANYVLVEYGTGAVMGVPAHDQRDFLFAKKYNLPIKVVITPPGQELKAEELTEAYTGEGILVNSGEFTGLANKEAIRIITQEAEKRGFGKYRVNYRLRDWLISRQRYWGAPIPVLYCEKCGIVPVPEDQLPVVLPYNVEFRPTGESPLKYVPEFLNATCPECGGPATRETDTMDTFICSSWYYYRYTSPRDKQQPWSKEKVERWLPVDQYIGGVEHAILHLLYSRFFTKVLYDLGLVHVDEPFTNLLTQGMVLKDGAKMSKSKGNVVSPEEIVEKYGADTARLFILFAAPPERDLEWSDQGVEGSFRFLNRVWRLIYQTKDRISDELREFSAKDKELNRLLHATIKKVTEDIEERFNFNTAISAIMELVNGLYQYKEGEINPGLLKEALNKLVILLAPFAPHIAEELWEALGNKQSVHLEKWPEYDEEALITEEVEIVIQVNGKVKDRVMVPRNAAEDELKEIALNTPKIKELTADKKIIKVIIVPEKLINIVVAG</sequence>
<dbReference type="EC" id="6.1.1.4" evidence="1"/>
<dbReference type="EMBL" id="CP000141">
    <property type="protein sequence ID" value="ABB15559.1"/>
    <property type="molecule type" value="Genomic_DNA"/>
</dbReference>
<dbReference type="RefSeq" id="WP_011343330.1">
    <property type="nucleotide sequence ID" value="NC_007503.1"/>
</dbReference>
<dbReference type="SMR" id="Q3AF30"/>
<dbReference type="FunCoup" id="Q3AF30">
    <property type="interactions" value="485"/>
</dbReference>
<dbReference type="STRING" id="246194.CHY_0393"/>
<dbReference type="KEGG" id="chy:CHY_0393"/>
<dbReference type="eggNOG" id="COG0495">
    <property type="taxonomic scope" value="Bacteria"/>
</dbReference>
<dbReference type="HOGENOM" id="CLU_004427_0_0_9"/>
<dbReference type="InParanoid" id="Q3AF30"/>
<dbReference type="OrthoDB" id="9810365at2"/>
<dbReference type="Proteomes" id="UP000002706">
    <property type="component" value="Chromosome"/>
</dbReference>
<dbReference type="GO" id="GO:0005829">
    <property type="term" value="C:cytosol"/>
    <property type="evidence" value="ECO:0007669"/>
    <property type="project" value="TreeGrafter"/>
</dbReference>
<dbReference type="GO" id="GO:0002161">
    <property type="term" value="F:aminoacyl-tRNA deacylase activity"/>
    <property type="evidence" value="ECO:0007669"/>
    <property type="project" value="InterPro"/>
</dbReference>
<dbReference type="GO" id="GO:0005524">
    <property type="term" value="F:ATP binding"/>
    <property type="evidence" value="ECO:0007669"/>
    <property type="project" value="UniProtKB-UniRule"/>
</dbReference>
<dbReference type="GO" id="GO:0004823">
    <property type="term" value="F:leucine-tRNA ligase activity"/>
    <property type="evidence" value="ECO:0007669"/>
    <property type="project" value="UniProtKB-UniRule"/>
</dbReference>
<dbReference type="GO" id="GO:0006429">
    <property type="term" value="P:leucyl-tRNA aminoacylation"/>
    <property type="evidence" value="ECO:0007669"/>
    <property type="project" value="UniProtKB-UniRule"/>
</dbReference>
<dbReference type="CDD" id="cd07958">
    <property type="entry name" value="Anticodon_Ia_Leu_BEm"/>
    <property type="match status" value="1"/>
</dbReference>
<dbReference type="CDD" id="cd00812">
    <property type="entry name" value="LeuRS_core"/>
    <property type="match status" value="1"/>
</dbReference>
<dbReference type="FunFam" id="3.40.50.620:FF:000003">
    <property type="entry name" value="Leucine--tRNA ligase"/>
    <property type="match status" value="1"/>
</dbReference>
<dbReference type="FunFam" id="3.40.50.620:FF:000056">
    <property type="entry name" value="Leucine--tRNA ligase"/>
    <property type="match status" value="1"/>
</dbReference>
<dbReference type="FunFam" id="1.10.730.10:FF:000011">
    <property type="entry name" value="Leucine--tRNA ligase chloroplastic/mitochondrial"/>
    <property type="match status" value="1"/>
</dbReference>
<dbReference type="Gene3D" id="3.10.20.590">
    <property type="match status" value="1"/>
</dbReference>
<dbReference type="Gene3D" id="3.40.50.620">
    <property type="entry name" value="HUPs"/>
    <property type="match status" value="2"/>
</dbReference>
<dbReference type="Gene3D" id="1.10.730.10">
    <property type="entry name" value="Isoleucyl-tRNA Synthetase, Domain 1"/>
    <property type="match status" value="2"/>
</dbReference>
<dbReference type="HAMAP" id="MF_00049_B">
    <property type="entry name" value="Leu_tRNA_synth_B"/>
    <property type="match status" value="1"/>
</dbReference>
<dbReference type="InterPro" id="IPR001412">
    <property type="entry name" value="aa-tRNA-synth_I_CS"/>
</dbReference>
<dbReference type="InterPro" id="IPR002302">
    <property type="entry name" value="Leu-tRNA-ligase"/>
</dbReference>
<dbReference type="InterPro" id="IPR025709">
    <property type="entry name" value="Leu_tRNA-synth_edit"/>
</dbReference>
<dbReference type="InterPro" id="IPR013155">
    <property type="entry name" value="M/V/L/I-tRNA-synth_anticd-bd"/>
</dbReference>
<dbReference type="InterPro" id="IPR015413">
    <property type="entry name" value="Methionyl/Leucyl_tRNA_Synth"/>
</dbReference>
<dbReference type="InterPro" id="IPR014729">
    <property type="entry name" value="Rossmann-like_a/b/a_fold"/>
</dbReference>
<dbReference type="InterPro" id="IPR009080">
    <property type="entry name" value="tRNAsynth_Ia_anticodon-bd"/>
</dbReference>
<dbReference type="InterPro" id="IPR009008">
    <property type="entry name" value="Val/Leu/Ile-tRNA-synth_edit"/>
</dbReference>
<dbReference type="NCBIfam" id="TIGR00396">
    <property type="entry name" value="leuS_bact"/>
    <property type="match status" value="1"/>
</dbReference>
<dbReference type="PANTHER" id="PTHR43740:SF2">
    <property type="entry name" value="LEUCINE--TRNA LIGASE, MITOCHONDRIAL"/>
    <property type="match status" value="1"/>
</dbReference>
<dbReference type="PANTHER" id="PTHR43740">
    <property type="entry name" value="LEUCYL-TRNA SYNTHETASE"/>
    <property type="match status" value="1"/>
</dbReference>
<dbReference type="Pfam" id="PF08264">
    <property type="entry name" value="Anticodon_1"/>
    <property type="match status" value="1"/>
</dbReference>
<dbReference type="Pfam" id="PF13603">
    <property type="entry name" value="tRNA-synt_1_2"/>
    <property type="match status" value="1"/>
</dbReference>
<dbReference type="Pfam" id="PF09334">
    <property type="entry name" value="tRNA-synt_1g"/>
    <property type="match status" value="2"/>
</dbReference>
<dbReference type="PRINTS" id="PR00985">
    <property type="entry name" value="TRNASYNTHLEU"/>
</dbReference>
<dbReference type="SUPFAM" id="SSF47323">
    <property type="entry name" value="Anticodon-binding domain of a subclass of class I aminoacyl-tRNA synthetases"/>
    <property type="match status" value="1"/>
</dbReference>
<dbReference type="SUPFAM" id="SSF52374">
    <property type="entry name" value="Nucleotidylyl transferase"/>
    <property type="match status" value="1"/>
</dbReference>
<dbReference type="SUPFAM" id="SSF50677">
    <property type="entry name" value="ValRS/IleRS/LeuRS editing domain"/>
    <property type="match status" value="1"/>
</dbReference>
<dbReference type="PROSITE" id="PS00178">
    <property type="entry name" value="AA_TRNA_LIGASE_I"/>
    <property type="match status" value="1"/>
</dbReference>
<evidence type="ECO:0000255" key="1">
    <source>
        <dbReference type="HAMAP-Rule" id="MF_00049"/>
    </source>
</evidence>
<gene>
    <name evidence="1" type="primary">leuS</name>
    <name type="ordered locus">CHY_0393</name>
</gene>
<accession>Q3AF30</accession>
<proteinExistence type="inferred from homology"/>
<protein>
    <recommendedName>
        <fullName evidence="1">Leucine--tRNA ligase</fullName>
        <ecNumber evidence="1">6.1.1.4</ecNumber>
    </recommendedName>
    <alternativeName>
        <fullName evidence="1">Leucyl-tRNA synthetase</fullName>
        <shortName evidence="1">LeuRS</shortName>
    </alternativeName>
</protein>
<feature type="chain" id="PRO_0000334741" description="Leucine--tRNA ligase">
    <location>
        <begin position="1"/>
        <end position="821"/>
    </location>
</feature>
<feature type="short sequence motif" description="'HIGH' region">
    <location>
        <begin position="42"/>
        <end position="52"/>
    </location>
</feature>
<feature type="short sequence motif" description="'KMSKS' region">
    <location>
        <begin position="583"/>
        <end position="587"/>
    </location>
</feature>
<feature type="binding site" evidence="1">
    <location>
        <position position="586"/>
    </location>
    <ligand>
        <name>ATP</name>
        <dbReference type="ChEBI" id="CHEBI:30616"/>
    </ligand>
</feature>
<reference key="1">
    <citation type="journal article" date="2005" name="PLoS Genet.">
        <title>Life in hot carbon monoxide: the complete genome sequence of Carboxydothermus hydrogenoformans Z-2901.</title>
        <authorList>
            <person name="Wu M."/>
            <person name="Ren Q."/>
            <person name="Durkin A.S."/>
            <person name="Daugherty S.C."/>
            <person name="Brinkac L.M."/>
            <person name="Dodson R.J."/>
            <person name="Madupu R."/>
            <person name="Sullivan S.A."/>
            <person name="Kolonay J.F."/>
            <person name="Nelson W.C."/>
            <person name="Tallon L.J."/>
            <person name="Jones K.M."/>
            <person name="Ulrich L.E."/>
            <person name="Gonzalez J.M."/>
            <person name="Zhulin I.B."/>
            <person name="Robb F.T."/>
            <person name="Eisen J.A."/>
        </authorList>
    </citation>
    <scope>NUCLEOTIDE SEQUENCE [LARGE SCALE GENOMIC DNA]</scope>
    <source>
        <strain>ATCC BAA-161 / DSM 6008 / Z-2901</strain>
    </source>
</reference>